<protein>
    <recommendedName>
        <fullName evidence="1">Enolase</fullName>
        <ecNumber evidence="1">4.2.1.11</ecNumber>
    </recommendedName>
    <alternativeName>
        <fullName evidence="1">2-phospho-D-glycerate hydro-lyase</fullName>
    </alternativeName>
    <alternativeName>
        <fullName evidence="1">2-phosphoglycerate dehydratase</fullName>
    </alternativeName>
</protein>
<dbReference type="EC" id="4.2.1.11" evidence="1"/>
<dbReference type="EMBL" id="CP002170">
    <property type="protein sequence ID" value="ADM21926.1"/>
    <property type="molecule type" value="Genomic_DNA"/>
</dbReference>
<dbReference type="RefSeq" id="WP_013302289.1">
    <property type="nucleotide sequence ID" value="NC_014448.1"/>
</dbReference>
<dbReference type="SMR" id="P0DXB0"/>
<dbReference type="GeneID" id="93248633"/>
<dbReference type="KEGG" id="mhr:MHR_0469"/>
<dbReference type="UniPathway" id="UPA00109">
    <property type="reaction ID" value="UER00187"/>
</dbReference>
<dbReference type="GO" id="GO:0009986">
    <property type="term" value="C:cell surface"/>
    <property type="evidence" value="ECO:0007669"/>
    <property type="project" value="UniProtKB-SubCell"/>
</dbReference>
<dbReference type="GO" id="GO:0005576">
    <property type="term" value="C:extracellular region"/>
    <property type="evidence" value="ECO:0007669"/>
    <property type="project" value="UniProtKB-SubCell"/>
</dbReference>
<dbReference type="GO" id="GO:0000015">
    <property type="term" value="C:phosphopyruvate hydratase complex"/>
    <property type="evidence" value="ECO:0007669"/>
    <property type="project" value="InterPro"/>
</dbReference>
<dbReference type="GO" id="GO:0000287">
    <property type="term" value="F:magnesium ion binding"/>
    <property type="evidence" value="ECO:0007669"/>
    <property type="project" value="UniProtKB-UniRule"/>
</dbReference>
<dbReference type="GO" id="GO:0004634">
    <property type="term" value="F:phosphopyruvate hydratase activity"/>
    <property type="evidence" value="ECO:0007669"/>
    <property type="project" value="UniProtKB-UniRule"/>
</dbReference>
<dbReference type="GO" id="GO:0007155">
    <property type="term" value="P:cell adhesion"/>
    <property type="evidence" value="ECO:0007669"/>
    <property type="project" value="UniProtKB-KW"/>
</dbReference>
<dbReference type="GO" id="GO:0006096">
    <property type="term" value="P:glycolytic process"/>
    <property type="evidence" value="ECO:0007669"/>
    <property type="project" value="UniProtKB-UniRule"/>
</dbReference>
<dbReference type="CDD" id="cd03313">
    <property type="entry name" value="enolase"/>
    <property type="match status" value="1"/>
</dbReference>
<dbReference type="FunFam" id="3.30.390.10:FF:000001">
    <property type="entry name" value="Enolase"/>
    <property type="match status" value="1"/>
</dbReference>
<dbReference type="Gene3D" id="3.20.20.120">
    <property type="entry name" value="Enolase-like C-terminal domain"/>
    <property type="match status" value="1"/>
</dbReference>
<dbReference type="Gene3D" id="3.30.390.10">
    <property type="entry name" value="Enolase-like, N-terminal domain"/>
    <property type="match status" value="1"/>
</dbReference>
<dbReference type="HAMAP" id="MF_00318">
    <property type="entry name" value="Enolase"/>
    <property type="match status" value="1"/>
</dbReference>
<dbReference type="InterPro" id="IPR000941">
    <property type="entry name" value="Enolase"/>
</dbReference>
<dbReference type="InterPro" id="IPR036849">
    <property type="entry name" value="Enolase-like_C_sf"/>
</dbReference>
<dbReference type="InterPro" id="IPR029017">
    <property type="entry name" value="Enolase-like_N"/>
</dbReference>
<dbReference type="InterPro" id="IPR020810">
    <property type="entry name" value="Enolase_C"/>
</dbReference>
<dbReference type="InterPro" id="IPR020809">
    <property type="entry name" value="Enolase_CS"/>
</dbReference>
<dbReference type="InterPro" id="IPR020811">
    <property type="entry name" value="Enolase_N"/>
</dbReference>
<dbReference type="NCBIfam" id="TIGR01060">
    <property type="entry name" value="eno"/>
    <property type="match status" value="1"/>
</dbReference>
<dbReference type="PANTHER" id="PTHR11902">
    <property type="entry name" value="ENOLASE"/>
    <property type="match status" value="1"/>
</dbReference>
<dbReference type="PANTHER" id="PTHR11902:SF1">
    <property type="entry name" value="ENOLASE"/>
    <property type="match status" value="1"/>
</dbReference>
<dbReference type="Pfam" id="PF00113">
    <property type="entry name" value="Enolase_C"/>
    <property type="match status" value="1"/>
</dbReference>
<dbReference type="Pfam" id="PF03952">
    <property type="entry name" value="Enolase_N"/>
    <property type="match status" value="1"/>
</dbReference>
<dbReference type="PIRSF" id="PIRSF001400">
    <property type="entry name" value="Enolase"/>
    <property type="match status" value="1"/>
</dbReference>
<dbReference type="PRINTS" id="PR00148">
    <property type="entry name" value="ENOLASE"/>
</dbReference>
<dbReference type="SFLD" id="SFLDS00001">
    <property type="entry name" value="Enolase"/>
    <property type="match status" value="1"/>
</dbReference>
<dbReference type="SFLD" id="SFLDF00002">
    <property type="entry name" value="enolase"/>
    <property type="match status" value="1"/>
</dbReference>
<dbReference type="SMART" id="SM01192">
    <property type="entry name" value="Enolase_C"/>
    <property type="match status" value="1"/>
</dbReference>
<dbReference type="SMART" id="SM01193">
    <property type="entry name" value="Enolase_N"/>
    <property type="match status" value="1"/>
</dbReference>
<dbReference type="SUPFAM" id="SSF51604">
    <property type="entry name" value="Enolase C-terminal domain-like"/>
    <property type="match status" value="1"/>
</dbReference>
<dbReference type="SUPFAM" id="SSF54826">
    <property type="entry name" value="Enolase N-terminal domain-like"/>
    <property type="match status" value="1"/>
</dbReference>
<dbReference type="PROSITE" id="PS00164">
    <property type="entry name" value="ENOLASE"/>
    <property type="match status" value="1"/>
</dbReference>
<evidence type="ECO:0000255" key="1">
    <source>
        <dbReference type="HAMAP-Rule" id="MF_00318"/>
    </source>
</evidence>
<evidence type="ECO:0000269" key="2">
    <source>
    </source>
</evidence>
<evidence type="ECO:0000305" key="3">
    <source>
    </source>
</evidence>
<sequence length="450" mass="48993">MSKISKIKAREVLDSRGNPTIQVEVWTEAGGHGSAIVPSGASTGTREALELRDGGTVYESNWFGGKGVQTAVDNVNNKIAVLLKGHCVLNQRKLDNMMLQLDKTENKSALGANAILGVSLAIAKAAADELKIPLYRYLGGTNAHQLPVPMLNVINGGEHASNTLDFQEFMIMPLGAKTFKQALQVANKIFHTLAKLLKKAGHGTQVGDEGGFAPNLKSHEEALDFLVKAIEEAGFRPATEGENAVAIAIDAAASELYHDGIYTFKKLKKAIEEKRQGFEPTRVQFTTEEMIQYFGHLFHTYPIISVEDGLAESDWKGFVRFTQKFGKTHQIVGDDLTVTNAKILAEAIEKKAINSILIKLNQIGTVSETLDTIELAHKAGYTTVISHRSGESEDTTIADLAVAVNAGQIKTGSLSRTDRIAKYNRLLAIEEAIQSTAQYKGEKVFFNIKK</sequence>
<comment type="function">
    <text evidence="1">Catalyzes the reversible conversion of 2-phosphoglycerate (2-PG) into phosphoenolpyruvate (PEP). It is essential for the degradation of carbohydrates via glycolysis.</text>
</comment>
<comment type="function">
    <text evidence="2">'Moonlights' as a plasminogen receptor and plasmin activator. Contributes to host (pig) cell adhesion; anti-enolase antibodies decrease binding to porcine kidney cells about 60% (PubMed:35337383). Binds host plasminogen and fibronectin in vitro; enhances the activity of host tissue-specific plasminogen activator (tPA), and helps plasminogen and tPA degrade articifial host extracellular matrices (PubMed:35337383).</text>
</comment>
<comment type="catalytic activity">
    <reaction evidence="1">
        <text>(2R)-2-phosphoglycerate = phosphoenolpyruvate + H2O</text>
        <dbReference type="Rhea" id="RHEA:10164"/>
        <dbReference type="ChEBI" id="CHEBI:15377"/>
        <dbReference type="ChEBI" id="CHEBI:58289"/>
        <dbReference type="ChEBI" id="CHEBI:58702"/>
        <dbReference type="EC" id="4.2.1.11"/>
    </reaction>
</comment>
<comment type="cofactor">
    <cofactor evidence="1">
        <name>Mg(2+)</name>
        <dbReference type="ChEBI" id="CHEBI:18420"/>
    </cofactor>
    <text evidence="1">Binds a second Mg(2+) ion via substrate during catalysis.</text>
</comment>
<comment type="pathway">
    <text evidence="1">Carbohydrate degradation; glycolysis; pyruvate from D-glyceraldehyde 3-phosphate: step 4/5.</text>
</comment>
<comment type="subcellular location">
    <subcellularLocation>
        <location evidence="1">Cytoplasm</location>
    </subcellularLocation>
    <subcellularLocation>
        <location evidence="1">Secreted</location>
    </subcellularLocation>
    <subcellularLocation>
        <location evidence="1 2">Cell surface</location>
    </subcellularLocation>
    <text evidence="1 2">Fractions of enolase are present in both the cytoplasm and on the cell surface (PubMed:35337383).</text>
</comment>
<comment type="miscellaneous">
    <text evidence="2 3">Pathogens have evolved a strategy to activate host plasminogen and manipulate plasmin activity for their benefit; plasminogen binding (even without its activation to plasmin) increases their adherence to host cells. Plasmin activity leads to degradation of host extracellular matrix proteins like collagen, fibronectin and laminin, facilitating bacterial dissemination and disease spread (Probable). Enolase is not the only protein in this bacterium that binds plasminogen (PubMed:35337383).</text>
</comment>
<comment type="similarity">
    <text evidence="1">Belongs to the enolase family.</text>
</comment>
<proteinExistence type="evidence at protein level"/>
<name>ENO_MESHH</name>
<keyword id="KW-0130">Cell adhesion</keyword>
<keyword id="KW-0963">Cytoplasm</keyword>
<keyword id="KW-0324">Glycolysis</keyword>
<keyword id="KW-0456">Lyase</keyword>
<keyword id="KW-0460">Magnesium</keyword>
<keyword id="KW-0479">Metal-binding</keyword>
<keyword id="KW-0964">Secreted</keyword>
<keyword id="KW-0843">Virulence</keyword>
<reference key="1">
    <citation type="journal article" date="2010" name="J. Bacteriol.">
        <title>Complete genome sequence of Mycoplasma hyorhinis strain HUB-1.</title>
        <authorList>
            <person name="Liu W."/>
            <person name="Fang L."/>
            <person name="Li S."/>
            <person name="Li Q."/>
            <person name="Zhou Z."/>
            <person name="Feng Z."/>
            <person name="Luo R."/>
            <person name="Shao G."/>
            <person name="Wang L."/>
            <person name="Chen H."/>
            <person name="Xiao S."/>
        </authorList>
    </citation>
    <scope>NUCLEOTIDE SEQUENCE [LARGE SCALE GENOMIC DNA]</scope>
    <source>
        <strain>HUB-1</strain>
    </source>
</reference>
<reference key="2">
    <citation type="journal article" date="2022" name="Vet. Res.">
        <title>A multifunctional enolase mediates cytoadhesion and interaction with host plasminogen and fibronectin in Mycoplasma hyorhinis.</title>
        <authorList>
            <person name="Wang J."/>
            <person name="Yu Y."/>
            <person name="Li Y."/>
            <person name="Li S."/>
            <person name="Wang L."/>
            <person name="Wei Y."/>
            <person name="Wu Y."/>
            <person name="Pillay B."/>
            <person name="Olaniran A.O."/>
            <person name="Chiliza T.E."/>
            <person name="Shao G."/>
            <person name="Feng Z."/>
            <person name="Xiong Q."/>
        </authorList>
    </citation>
    <scope>FUNCTION IN HOST CELL ADHESION</scope>
    <scope>FUNCTION IN HOST PLASMINOGEN ACTIVATION</scope>
    <scope>SUBCELLULAR LOCATION</scope>
    <scope>MUTAGENESIS OF 449-LYS-LYS-450</scope>
    <source>
        <strain>HUB-1</strain>
    </source>
</reference>
<gene>
    <name evidence="1" type="primary">eno</name>
    <name type="ordered locus">MHR_0469</name>
</gene>
<accession>P0DXB0</accession>
<organism>
    <name type="scientific">Mesomycoplasma hyorhinis (strain HUB-1)</name>
    <name type="common">Mycoplasma hyorhinis</name>
    <dbReference type="NCBI Taxonomy" id="872331"/>
    <lineage>
        <taxon>Bacteria</taxon>
        <taxon>Bacillati</taxon>
        <taxon>Mycoplasmatota</taxon>
        <taxon>Mycoplasmoidales</taxon>
        <taxon>Metamycoplasmataceae</taxon>
        <taxon>Mesomycoplasma</taxon>
    </lineage>
</organism>
<feature type="chain" id="PRO_0000460295" description="Enolase">
    <location>
        <begin position="1"/>
        <end position="450"/>
    </location>
</feature>
<feature type="active site" description="Proton donor" evidence="1">
    <location>
        <position position="209"/>
    </location>
</feature>
<feature type="active site" description="Proton acceptor" evidence="1">
    <location>
        <position position="359"/>
    </location>
</feature>
<feature type="binding site" evidence="1">
    <location>
        <position position="167"/>
    </location>
    <ligand>
        <name>(2R)-2-phosphoglycerate</name>
        <dbReference type="ChEBI" id="CHEBI:58289"/>
    </ligand>
</feature>
<feature type="binding site" evidence="1">
    <location>
        <position position="250"/>
    </location>
    <ligand>
        <name>Mg(2+)</name>
        <dbReference type="ChEBI" id="CHEBI:18420"/>
    </ligand>
</feature>
<feature type="binding site" evidence="1">
    <location>
        <position position="307"/>
    </location>
    <ligand>
        <name>Mg(2+)</name>
        <dbReference type="ChEBI" id="CHEBI:18420"/>
    </ligand>
</feature>
<feature type="binding site" evidence="1">
    <location>
        <position position="334"/>
    </location>
    <ligand>
        <name>Mg(2+)</name>
        <dbReference type="ChEBI" id="CHEBI:18420"/>
    </ligand>
</feature>
<feature type="binding site" evidence="1">
    <location>
        <position position="359"/>
    </location>
    <ligand>
        <name>(2R)-2-phosphoglycerate</name>
        <dbReference type="ChEBI" id="CHEBI:58289"/>
    </ligand>
</feature>
<feature type="binding site" evidence="1">
    <location>
        <position position="388"/>
    </location>
    <ligand>
        <name>(2R)-2-phosphoglycerate</name>
        <dbReference type="ChEBI" id="CHEBI:58289"/>
    </ligand>
</feature>
<feature type="binding site" evidence="1">
    <location>
        <position position="389"/>
    </location>
    <ligand>
        <name>(2R)-2-phosphoglycerate</name>
        <dbReference type="ChEBI" id="CHEBI:58289"/>
    </ligand>
</feature>
<feature type="binding site" evidence="1">
    <location>
        <position position="410"/>
    </location>
    <ligand>
        <name>(2R)-2-phosphoglycerate</name>
        <dbReference type="ChEBI" id="CHEBI:58289"/>
    </ligand>
</feature>
<feature type="mutagenesis site" description="Deacreased binding to host plasminogen and host fibronectin, decreased host plasminogen activation." evidence="2">
    <original>KK</original>
    <variation>LL</variation>
    <location>
        <begin position="449"/>
        <end position="450"/>
    </location>
</feature>